<reference key="1">
    <citation type="journal article" date="2002" name="J. Bacteriol.">
        <title>Whole-genome comparison of Mycobacterium tuberculosis clinical and laboratory strains.</title>
        <authorList>
            <person name="Fleischmann R.D."/>
            <person name="Alland D."/>
            <person name="Eisen J.A."/>
            <person name="Carpenter L."/>
            <person name="White O."/>
            <person name="Peterson J.D."/>
            <person name="DeBoy R.T."/>
            <person name="Dodson R.J."/>
            <person name="Gwinn M.L."/>
            <person name="Haft D.H."/>
            <person name="Hickey E.K."/>
            <person name="Kolonay J.F."/>
            <person name="Nelson W.C."/>
            <person name="Umayam L.A."/>
            <person name="Ermolaeva M.D."/>
            <person name="Salzberg S.L."/>
            <person name="Delcher A."/>
            <person name="Utterback T.R."/>
            <person name="Weidman J.F."/>
            <person name="Khouri H.M."/>
            <person name="Gill J."/>
            <person name="Mikula A."/>
            <person name="Bishai W."/>
            <person name="Jacobs W.R. Jr."/>
            <person name="Venter J.C."/>
            <person name="Fraser C.M."/>
        </authorList>
    </citation>
    <scope>NUCLEOTIDE SEQUENCE [LARGE SCALE GENOMIC DNA]</scope>
    <source>
        <strain>CDC 1551 / Oshkosh</strain>
    </source>
</reference>
<keyword id="KW-0010">Activator</keyword>
<keyword id="KW-1015">Disulfide bond</keyword>
<keyword id="KW-0676">Redox-active center</keyword>
<keyword id="KW-1185">Reference proteome</keyword>
<keyword id="KW-0346">Stress response</keyword>
<keyword id="KW-0804">Transcription</keyword>
<keyword id="KW-0805">Transcription regulation</keyword>
<gene>
    <name evidence="1" type="primary">aosR</name>
    <name type="ordered locus">MT1374</name>
</gene>
<accession>P9WM24</accession>
<accession>L0T7Y8</accession>
<accession>P64809</accession>
<accession>Q10643</accession>
<feature type="chain" id="PRO_0000427378" description="Oxidative stress regulator AosR">
    <location>
        <begin position="1"/>
        <end position="218"/>
    </location>
</feature>
<feature type="short sequence motif" description="CXXXC" evidence="1">
    <location>
        <begin position="5"/>
        <end position="9"/>
    </location>
</feature>
<feature type="disulfide bond" description="Redox-active" evidence="1">
    <location>
        <begin position="5"/>
        <end position="9"/>
    </location>
</feature>
<organism>
    <name type="scientific">Mycobacterium tuberculosis (strain CDC 1551 / Oshkosh)</name>
    <dbReference type="NCBI Taxonomy" id="83331"/>
    <lineage>
        <taxon>Bacteria</taxon>
        <taxon>Bacillati</taxon>
        <taxon>Actinomycetota</taxon>
        <taxon>Actinomycetes</taxon>
        <taxon>Mycobacteriales</taxon>
        <taxon>Mycobacteriaceae</taxon>
        <taxon>Mycobacterium</taxon>
        <taxon>Mycobacterium tuberculosis complex</taxon>
    </lineage>
</organism>
<sequence>MPPVCGRRCSRTGEIRGYSGSIVRRWKRVETRDGPRFRSSLAPHEAALLKNLAGAMIGLLDDRDSSSPSDELEEITGIKTGHAQRPGDPTLRRLLPDFYRPDDLDDDDPTAVDGSESFNAALRSLHEPEIIDAKRVAAQQLLDTVPDNGGRLELTESDANAWIAAVNDLRLALGVMLEIGPRGPERLPGNHPLAAHFNVYQWLTVLQEYLVLVLMGSR</sequence>
<name>AOSR_MYCTO</name>
<comment type="function">
    <text evidence="1">Transcription factor crucial for intra-mycobacterial redox homeostasis and protection against host-derived oxidative and nitrosative radicals. In response to oxidative stress, interacts with the ECF sigma factor SigH and, in conjunction with SigH, binds to an auxiliary promoter upstream of mec-cysO-cysM, leading to the transcriptional activation of these genes encoding a non-canonical actinomycete-specific cysteine biosynthesis pathway. Increased transcription of mec-cysO-cysM results in enhanced production of L-cysteine and cysteine-derived antioxidant molecules. Increased production of cysteine protects mycobacteria cells from host phagocyte-derived oxidative and nitrosative stress, thus facilitating the mycobacterial growth in the host.</text>
</comment>
<comment type="activity regulation">
    <text evidence="1">Activity is modulated by the formation of a disulfide bound within the N-terminal Cys-X-X-X-Cys (CXXXC) motif. This intramolecular disulfide bond is formed in response to oxidative stress, and results in oxidative stress-dependent interaction with the sigma factor SigH.</text>
</comment>
<comment type="subunit">
    <text evidence="1">Homodimer. Under oxidative stress, interacts with the extracytoplasmic-function (ECF) RNA polymerase sigma factor SigH.</text>
</comment>
<comment type="similarity">
    <text evidence="2">Belongs to the AosR family.</text>
</comment>
<proteinExistence type="inferred from homology"/>
<protein>
    <recommendedName>
        <fullName evidence="1">Oxidative stress regulator AosR</fullName>
    </recommendedName>
    <alternativeName>
        <fullName evidence="1">Actinomycetes oxidative stress regulator</fullName>
    </alternativeName>
</protein>
<dbReference type="EMBL" id="AE000516">
    <property type="protein sequence ID" value="AAK45638.1"/>
    <property type="molecule type" value="Genomic_DNA"/>
</dbReference>
<dbReference type="PIR" id="H70770">
    <property type="entry name" value="H70770"/>
</dbReference>
<dbReference type="KEGG" id="mtc:MT1374"/>
<dbReference type="PATRIC" id="fig|83331.31.peg.1481"/>
<dbReference type="HOGENOM" id="CLU_087287_3_0_11"/>
<dbReference type="Proteomes" id="UP000001020">
    <property type="component" value="Chromosome"/>
</dbReference>
<dbReference type="InterPro" id="IPR018561">
    <property type="entry name" value="AosR"/>
</dbReference>
<dbReference type="Pfam" id="PF09438">
    <property type="entry name" value="DUF2017"/>
    <property type="match status" value="1"/>
</dbReference>
<evidence type="ECO:0000250" key="1">
    <source>
        <dbReference type="UniProtKB" id="P9WM25"/>
    </source>
</evidence>
<evidence type="ECO:0000305" key="2"/>